<reference key="1">
    <citation type="journal article" date="2001" name="Mol. Biol. Evol.">
        <title>Mitogenomic exploration of higher teleostean phylogenies: a case study for moderate-scale evolutionary genomics with 38 newly determined complete mitochondrial DNA sequences.</title>
        <authorList>
            <person name="Miya M."/>
            <person name="Kawaguchi A."/>
            <person name="Nishida M."/>
        </authorList>
    </citation>
    <scope>NUCLEOTIDE SEQUENCE [GENOMIC DNA]</scope>
</reference>
<dbReference type="EMBL" id="AP002951">
    <property type="protein sequence ID" value="BAB70455.1"/>
    <property type="molecule type" value="Genomic_DNA"/>
</dbReference>
<dbReference type="RefSeq" id="NP_443449.1">
    <property type="nucleotide sequence ID" value="NC_003176.1"/>
</dbReference>
<dbReference type="SMR" id="Q94S78"/>
<dbReference type="GeneID" id="804393"/>
<dbReference type="CTD" id="4519"/>
<dbReference type="GO" id="GO:0005743">
    <property type="term" value="C:mitochondrial inner membrane"/>
    <property type="evidence" value="ECO:0007669"/>
    <property type="project" value="UniProtKB-SubCell"/>
</dbReference>
<dbReference type="GO" id="GO:0045275">
    <property type="term" value="C:respiratory chain complex III"/>
    <property type="evidence" value="ECO:0007669"/>
    <property type="project" value="InterPro"/>
</dbReference>
<dbReference type="GO" id="GO:0046872">
    <property type="term" value="F:metal ion binding"/>
    <property type="evidence" value="ECO:0007669"/>
    <property type="project" value="UniProtKB-KW"/>
</dbReference>
<dbReference type="GO" id="GO:0008121">
    <property type="term" value="F:ubiquinol-cytochrome-c reductase activity"/>
    <property type="evidence" value="ECO:0007669"/>
    <property type="project" value="InterPro"/>
</dbReference>
<dbReference type="GO" id="GO:0006122">
    <property type="term" value="P:mitochondrial electron transport, ubiquinol to cytochrome c"/>
    <property type="evidence" value="ECO:0007669"/>
    <property type="project" value="TreeGrafter"/>
</dbReference>
<dbReference type="CDD" id="cd00290">
    <property type="entry name" value="cytochrome_b_C"/>
    <property type="match status" value="1"/>
</dbReference>
<dbReference type="CDD" id="cd00284">
    <property type="entry name" value="Cytochrome_b_N"/>
    <property type="match status" value="1"/>
</dbReference>
<dbReference type="FunFam" id="1.20.810.10:FF:000002">
    <property type="entry name" value="Cytochrome b"/>
    <property type="match status" value="1"/>
</dbReference>
<dbReference type="Gene3D" id="1.20.810.10">
    <property type="entry name" value="Cytochrome Bc1 Complex, Chain C"/>
    <property type="match status" value="1"/>
</dbReference>
<dbReference type="InterPro" id="IPR005798">
    <property type="entry name" value="Cyt_b/b6_C"/>
</dbReference>
<dbReference type="InterPro" id="IPR036150">
    <property type="entry name" value="Cyt_b/b6_C_sf"/>
</dbReference>
<dbReference type="InterPro" id="IPR005797">
    <property type="entry name" value="Cyt_b/b6_N"/>
</dbReference>
<dbReference type="InterPro" id="IPR027387">
    <property type="entry name" value="Cytb/b6-like_sf"/>
</dbReference>
<dbReference type="InterPro" id="IPR030689">
    <property type="entry name" value="Cytochrome_b"/>
</dbReference>
<dbReference type="InterPro" id="IPR048260">
    <property type="entry name" value="Cytochrome_b_C_euk/bac"/>
</dbReference>
<dbReference type="InterPro" id="IPR048259">
    <property type="entry name" value="Cytochrome_b_N_euk/bac"/>
</dbReference>
<dbReference type="InterPro" id="IPR016174">
    <property type="entry name" value="Di-haem_cyt_TM"/>
</dbReference>
<dbReference type="PANTHER" id="PTHR19271">
    <property type="entry name" value="CYTOCHROME B"/>
    <property type="match status" value="1"/>
</dbReference>
<dbReference type="PANTHER" id="PTHR19271:SF16">
    <property type="entry name" value="CYTOCHROME B"/>
    <property type="match status" value="1"/>
</dbReference>
<dbReference type="Pfam" id="PF00032">
    <property type="entry name" value="Cytochrom_B_C"/>
    <property type="match status" value="1"/>
</dbReference>
<dbReference type="Pfam" id="PF00033">
    <property type="entry name" value="Cytochrome_B"/>
    <property type="match status" value="1"/>
</dbReference>
<dbReference type="PIRSF" id="PIRSF038885">
    <property type="entry name" value="COB"/>
    <property type="match status" value="1"/>
</dbReference>
<dbReference type="SUPFAM" id="SSF81648">
    <property type="entry name" value="a domain/subunit of cytochrome bc1 complex (Ubiquinol-cytochrome c reductase)"/>
    <property type="match status" value="1"/>
</dbReference>
<dbReference type="SUPFAM" id="SSF81342">
    <property type="entry name" value="Transmembrane di-heme cytochromes"/>
    <property type="match status" value="1"/>
</dbReference>
<dbReference type="PROSITE" id="PS51003">
    <property type="entry name" value="CYTB_CTER"/>
    <property type="match status" value="1"/>
</dbReference>
<dbReference type="PROSITE" id="PS51002">
    <property type="entry name" value="CYTB_NTER"/>
    <property type="match status" value="1"/>
</dbReference>
<protein>
    <recommendedName>
        <fullName>Cytochrome b</fullName>
    </recommendedName>
    <alternativeName>
        <fullName>Complex III subunit 3</fullName>
    </alternativeName>
    <alternativeName>
        <fullName>Complex III subunit III</fullName>
    </alternativeName>
    <alternativeName>
        <fullName>Cytochrome b-c1 complex subunit 3</fullName>
    </alternativeName>
    <alternativeName>
        <fullName>Ubiquinol-cytochrome-c reductase complex cytochrome b subunit</fullName>
    </alternativeName>
</protein>
<gene>
    <name type="primary">mt-cyb</name>
    <name type="synonym">cob</name>
    <name type="synonym">cytb</name>
    <name type="synonym">mtcyb</name>
</gene>
<feature type="chain" id="PRO_0000061407" description="Cytochrome b">
    <location>
        <begin position="1"/>
        <end position="380"/>
    </location>
</feature>
<feature type="transmembrane region" description="Helical" evidence="2">
    <location>
        <begin position="33"/>
        <end position="53"/>
    </location>
</feature>
<feature type="transmembrane region" description="Helical" evidence="2">
    <location>
        <begin position="77"/>
        <end position="98"/>
    </location>
</feature>
<feature type="transmembrane region" description="Helical" evidence="2">
    <location>
        <begin position="113"/>
        <end position="133"/>
    </location>
</feature>
<feature type="transmembrane region" description="Helical" evidence="2">
    <location>
        <begin position="178"/>
        <end position="198"/>
    </location>
</feature>
<feature type="transmembrane region" description="Helical" evidence="2">
    <location>
        <begin position="226"/>
        <end position="246"/>
    </location>
</feature>
<feature type="transmembrane region" description="Helical" evidence="2">
    <location>
        <begin position="288"/>
        <end position="308"/>
    </location>
</feature>
<feature type="transmembrane region" description="Helical" evidence="2">
    <location>
        <begin position="320"/>
        <end position="340"/>
    </location>
</feature>
<feature type="transmembrane region" description="Helical" evidence="2">
    <location>
        <begin position="347"/>
        <end position="367"/>
    </location>
</feature>
<feature type="binding site" description="axial binding residue" evidence="2">
    <location>
        <position position="83"/>
    </location>
    <ligand>
        <name>heme b</name>
        <dbReference type="ChEBI" id="CHEBI:60344"/>
        <label>b562</label>
    </ligand>
    <ligandPart>
        <name>Fe</name>
        <dbReference type="ChEBI" id="CHEBI:18248"/>
    </ligandPart>
</feature>
<feature type="binding site" description="axial binding residue" evidence="2">
    <location>
        <position position="97"/>
    </location>
    <ligand>
        <name>heme b</name>
        <dbReference type="ChEBI" id="CHEBI:60344"/>
        <label>b566</label>
    </ligand>
    <ligandPart>
        <name>Fe</name>
        <dbReference type="ChEBI" id="CHEBI:18248"/>
    </ligandPart>
</feature>
<feature type="binding site" description="axial binding residue" evidence="2">
    <location>
        <position position="182"/>
    </location>
    <ligand>
        <name>heme b</name>
        <dbReference type="ChEBI" id="CHEBI:60344"/>
        <label>b562</label>
    </ligand>
    <ligandPart>
        <name>Fe</name>
        <dbReference type="ChEBI" id="CHEBI:18248"/>
    </ligandPart>
</feature>
<feature type="binding site" description="axial binding residue" evidence="2">
    <location>
        <position position="196"/>
    </location>
    <ligand>
        <name>heme b</name>
        <dbReference type="ChEBI" id="CHEBI:60344"/>
        <label>b566</label>
    </ligand>
    <ligandPart>
        <name>Fe</name>
        <dbReference type="ChEBI" id="CHEBI:18248"/>
    </ligandPart>
</feature>
<feature type="binding site" evidence="2">
    <location>
        <position position="201"/>
    </location>
    <ligand>
        <name>a ubiquinone</name>
        <dbReference type="ChEBI" id="CHEBI:16389"/>
    </ligand>
</feature>
<organism>
    <name type="scientific">Kareius bicoloratus</name>
    <name type="common">Stone flounder</name>
    <name type="synonym">Platichthys bicoloratus</name>
    <dbReference type="NCBI Taxonomy" id="143345"/>
    <lineage>
        <taxon>Eukaryota</taxon>
        <taxon>Metazoa</taxon>
        <taxon>Chordata</taxon>
        <taxon>Craniata</taxon>
        <taxon>Vertebrata</taxon>
        <taxon>Euteleostomi</taxon>
        <taxon>Actinopterygii</taxon>
        <taxon>Neopterygii</taxon>
        <taxon>Teleostei</taxon>
        <taxon>Neoteleostei</taxon>
        <taxon>Acanthomorphata</taxon>
        <taxon>Carangaria</taxon>
        <taxon>Pleuronectiformes</taxon>
        <taxon>Pleuronectoidei</taxon>
        <taxon>Pleuronectidae</taxon>
        <taxon>Kareius</taxon>
    </lineage>
</organism>
<keyword id="KW-0249">Electron transport</keyword>
<keyword id="KW-0349">Heme</keyword>
<keyword id="KW-0408">Iron</keyword>
<keyword id="KW-0472">Membrane</keyword>
<keyword id="KW-0479">Metal-binding</keyword>
<keyword id="KW-0496">Mitochondrion</keyword>
<keyword id="KW-0999">Mitochondrion inner membrane</keyword>
<keyword id="KW-0679">Respiratory chain</keyword>
<keyword id="KW-0812">Transmembrane</keyword>
<keyword id="KW-1133">Transmembrane helix</keyword>
<keyword id="KW-0813">Transport</keyword>
<keyword id="KW-0830">Ubiquinone</keyword>
<accession>Q94S78</accession>
<proteinExistence type="inferred from homology"/>
<sequence length="380" mass="42336">MANLRKSHPLLKIANDALVDLPAPSNISVWWNFGSLLGLCLVTQIATGLFLAMHYTSDIATAFTSVAHICRDVNYGWLIRSIHANGASFFFICIYLHIGRGLYYGSYLYKETWTIGVVLLLLVMMTAFVGYVLPWGQMSFWGATVITNLLSAVPYVGGTLVQWIWGGFSVDNATLTRFFAFHFLFPFIIAAATVIHLLFLHETGSNNPTGLNSDSDKVPFHPYFTYKDLLGFAVLLTALASLALFSPNLLGDPDNFTPANPLVTPPHIKPEWYFLFAYAILRSIPNKLGGVLALLFSILVLMLVPFLHTSKQRSLMFRPVTQFLFWSLVADVMILTWIGGMPVEHPFVIIGQVASLIYFSLFLVLIPTAGLMENKILGWK</sequence>
<comment type="function">
    <text evidence="2">Component of the ubiquinol-cytochrome c reductase complex (complex III or cytochrome b-c1 complex) that is part of the mitochondrial respiratory chain. The b-c1 complex mediates electron transfer from ubiquinol to cytochrome c. Contributes to the generation of a proton gradient across the mitochondrial membrane that is then used for ATP synthesis.</text>
</comment>
<comment type="cofactor">
    <cofactor evidence="2">
        <name>heme b</name>
        <dbReference type="ChEBI" id="CHEBI:60344"/>
    </cofactor>
    <text evidence="2">Binds 2 heme b groups non-covalently.</text>
</comment>
<comment type="subunit">
    <text evidence="2">The cytochrome bc1 complex contains 3 respiratory subunits (MT-CYB, CYC1 and UQCRFS1), 2 core proteins (UQCRC1 and UQCRC2) and probably 6 low-molecular weight proteins.</text>
</comment>
<comment type="subcellular location">
    <subcellularLocation>
        <location evidence="2">Mitochondrion inner membrane</location>
        <topology evidence="2">Multi-pass membrane protein</topology>
    </subcellularLocation>
</comment>
<comment type="miscellaneous">
    <text evidence="1">Heme 1 (or BL or b562) is low-potential and absorbs at about 562 nm, and heme 2 (or BH or b566) is high-potential and absorbs at about 566 nm.</text>
</comment>
<comment type="similarity">
    <text evidence="3 4">Belongs to the cytochrome b family.</text>
</comment>
<comment type="caution">
    <text evidence="2">The full-length protein contains only eight transmembrane helices, not nine as predicted by bioinformatics tools.</text>
</comment>
<evidence type="ECO:0000250" key="1"/>
<evidence type="ECO:0000250" key="2">
    <source>
        <dbReference type="UniProtKB" id="P00157"/>
    </source>
</evidence>
<evidence type="ECO:0000255" key="3">
    <source>
        <dbReference type="PROSITE-ProRule" id="PRU00967"/>
    </source>
</evidence>
<evidence type="ECO:0000255" key="4">
    <source>
        <dbReference type="PROSITE-ProRule" id="PRU00968"/>
    </source>
</evidence>
<name>CYB_KARBC</name>
<geneLocation type="mitochondrion"/>